<dbReference type="EC" id="2.7.7.6" evidence="1"/>
<dbReference type="EMBL" id="AJ938182">
    <property type="protein sequence ID" value="CAI80181.1"/>
    <property type="molecule type" value="Genomic_DNA"/>
</dbReference>
<dbReference type="RefSeq" id="WP_000918667.1">
    <property type="nucleotide sequence ID" value="NC_007622.1"/>
</dbReference>
<dbReference type="SMR" id="Q2YSB9"/>
<dbReference type="KEGG" id="sab:SAB0493"/>
<dbReference type="HOGENOM" id="CLU_000524_4_1_9"/>
<dbReference type="GO" id="GO:0000428">
    <property type="term" value="C:DNA-directed RNA polymerase complex"/>
    <property type="evidence" value="ECO:0007669"/>
    <property type="project" value="UniProtKB-KW"/>
</dbReference>
<dbReference type="GO" id="GO:0003677">
    <property type="term" value="F:DNA binding"/>
    <property type="evidence" value="ECO:0007669"/>
    <property type="project" value="UniProtKB-UniRule"/>
</dbReference>
<dbReference type="GO" id="GO:0003899">
    <property type="term" value="F:DNA-directed RNA polymerase activity"/>
    <property type="evidence" value="ECO:0007669"/>
    <property type="project" value="UniProtKB-UniRule"/>
</dbReference>
<dbReference type="GO" id="GO:0032549">
    <property type="term" value="F:ribonucleoside binding"/>
    <property type="evidence" value="ECO:0007669"/>
    <property type="project" value="InterPro"/>
</dbReference>
<dbReference type="GO" id="GO:0006351">
    <property type="term" value="P:DNA-templated transcription"/>
    <property type="evidence" value="ECO:0007669"/>
    <property type="project" value="UniProtKB-UniRule"/>
</dbReference>
<dbReference type="CDD" id="cd00653">
    <property type="entry name" value="RNA_pol_B_RPB2"/>
    <property type="match status" value="1"/>
</dbReference>
<dbReference type="FunFam" id="3.90.1800.10:FF:000001">
    <property type="entry name" value="DNA-directed RNA polymerase subunit beta"/>
    <property type="match status" value="1"/>
</dbReference>
<dbReference type="Gene3D" id="2.40.50.100">
    <property type="match status" value="1"/>
</dbReference>
<dbReference type="Gene3D" id="2.40.50.150">
    <property type="match status" value="1"/>
</dbReference>
<dbReference type="Gene3D" id="3.90.1100.10">
    <property type="match status" value="3"/>
</dbReference>
<dbReference type="Gene3D" id="2.40.270.10">
    <property type="entry name" value="DNA-directed RNA polymerase, subunit 2, domain 6"/>
    <property type="match status" value="1"/>
</dbReference>
<dbReference type="Gene3D" id="3.90.1800.10">
    <property type="entry name" value="RNA polymerase alpha subunit dimerisation domain"/>
    <property type="match status" value="1"/>
</dbReference>
<dbReference type="Gene3D" id="3.90.1110.10">
    <property type="entry name" value="RNA polymerase Rpb2, domain 2"/>
    <property type="match status" value="1"/>
</dbReference>
<dbReference type="HAMAP" id="MF_01321">
    <property type="entry name" value="RNApol_bact_RpoB"/>
    <property type="match status" value="1"/>
</dbReference>
<dbReference type="InterPro" id="IPR019462">
    <property type="entry name" value="DNA-dir_RNA_pol_bsu_external_1"/>
</dbReference>
<dbReference type="InterPro" id="IPR015712">
    <property type="entry name" value="DNA-dir_RNA_pol_su2"/>
</dbReference>
<dbReference type="InterPro" id="IPR007120">
    <property type="entry name" value="DNA-dir_RNAP_su2_dom"/>
</dbReference>
<dbReference type="InterPro" id="IPR037033">
    <property type="entry name" value="DNA-dir_RNAP_su2_hyb_sf"/>
</dbReference>
<dbReference type="InterPro" id="IPR010243">
    <property type="entry name" value="RNA_pol_bsu_bac"/>
</dbReference>
<dbReference type="InterPro" id="IPR007121">
    <property type="entry name" value="RNA_pol_bsu_CS"/>
</dbReference>
<dbReference type="InterPro" id="IPR007644">
    <property type="entry name" value="RNA_pol_bsu_protrusion"/>
</dbReference>
<dbReference type="InterPro" id="IPR007642">
    <property type="entry name" value="RNA_pol_Rpb2_2"/>
</dbReference>
<dbReference type="InterPro" id="IPR037034">
    <property type="entry name" value="RNA_pol_Rpb2_2_sf"/>
</dbReference>
<dbReference type="InterPro" id="IPR007645">
    <property type="entry name" value="RNA_pol_Rpb2_3"/>
</dbReference>
<dbReference type="InterPro" id="IPR007641">
    <property type="entry name" value="RNA_pol_Rpb2_7"/>
</dbReference>
<dbReference type="InterPro" id="IPR014724">
    <property type="entry name" value="RNA_pol_RPB2_OB-fold"/>
</dbReference>
<dbReference type="NCBIfam" id="NF001616">
    <property type="entry name" value="PRK00405.1"/>
    <property type="match status" value="1"/>
</dbReference>
<dbReference type="NCBIfam" id="TIGR02013">
    <property type="entry name" value="rpoB"/>
    <property type="match status" value="1"/>
</dbReference>
<dbReference type="PANTHER" id="PTHR20856">
    <property type="entry name" value="DNA-DIRECTED RNA POLYMERASE I SUBUNIT 2"/>
    <property type="match status" value="1"/>
</dbReference>
<dbReference type="Pfam" id="PF04563">
    <property type="entry name" value="RNA_pol_Rpb2_1"/>
    <property type="match status" value="1"/>
</dbReference>
<dbReference type="Pfam" id="PF04561">
    <property type="entry name" value="RNA_pol_Rpb2_2"/>
    <property type="match status" value="2"/>
</dbReference>
<dbReference type="Pfam" id="PF04565">
    <property type="entry name" value="RNA_pol_Rpb2_3"/>
    <property type="match status" value="1"/>
</dbReference>
<dbReference type="Pfam" id="PF10385">
    <property type="entry name" value="RNA_pol_Rpb2_45"/>
    <property type="match status" value="1"/>
</dbReference>
<dbReference type="Pfam" id="PF00562">
    <property type="entry name" value="RNA_pol_Rpb2_6"/>
    <property type="match status" value="1"/>
</dbReference>
<dbReference type="Pfam" id="PF04560">
    <property type="entry name" value="RNA_pol_Rpb2_7"/>
    <property type="match status" value="1"/>
</dbReference>
<dbReference type="SUPFAM" id="SSF64484">
    <property type="entry name" value="beta and beta-prime subunits of DNA dependent RNA-polymerase"/>
    <property type="match status" value="1"/>
</dbReference>
<dbReference type="PROSITE" id="PS01166">
    <property type="entry name" value="RNA_POL_BETA"/>
    <property type="match status" value="1"/>
</dbReference>
<accession>Q2YSB9</accession>
<feature type="chain" id="PRO_0000237314" description="DNA-directed RNA polymerase subunit beta">
    <location>
        <begin position="1"/>
        <end position="1183"/>
    </location>
</feature>
<gene>
    <name evidence="1" type="primary">rpoB</name>
    <name type="ordered locus">SAB0493</name>
</gene>
<proteinExistence type="inferred from homology"/>
<name>RPOB_STAAB</name>
<protein>
    <recommendedName>
        <fullName evidence="1">DNA-directed RNA polymerase subunit beta</fullName>
        <shortName evidence="1">RNAP subunit beta</shortName>
        <ecNumber evidence="1">2.7.7.6</ecNumber>
    </recommendedName>
    <alternativeName>
        <fullName evidence="1">RNA polymerase subunit beta</fullName>
    </alternativeName>
    <alternativeName>
        <fullName evidence="1">Transcriptase subunit beta</fullName>
    </alternativeName>
</protein>
<reference key="1">
    <citation type="journal article" date="2007" name="PLoS ONE">
        <title>Molecular correlates of host specialization in Staphylococcus aureus.</title>
        <authorList>
            <person name="Herron-Olson L."/>
            <person name="Fitzgerald J.R."/>
            <person name="Musser J.M."/>
            <person name="Kapur V."/>
        </authorList>
    </citation>
    <scope>NUCLEOTIDE SEQUENCE [LARGE SCALE GENOMIC DNA]</scope>
    <source>
        <strain>bovine RF122 / ET3-1</strain>
    </source>
</reference>
<comment type="function">
    <text evidence="1">DNA-dependent RNA polymerase catalyzes the transcription of DNA into RNA using the four ribonucleoside triphosphates as substrates.</text>
</comment>
<comment type="catalytic activity">
    <reaction evidence="1">
        <text>RNA(n) + a ribonucleoside 5'-triphosphate = RNA(n+1) + diphosphate</text>
        <dbReference type="Rhea" id="RHEA:21248"/>
        <dbReference type="Rhea" id="RHEA-COMP:14527"/>
        <dbReference type="Rhea" id="RHEA-COMP:17342"/>
        <dbReference type="ChEBI" id="CHEBI:33019"/>
        <dbReference type="ChEBI" id="CHEBI:61557"/>
        <dbReference type="ChEBI" id="CHEBI:140395"/>
        <dbReference type="EC" id="2.7.7.6"/>
    </reaction>
</comment>
<comment type="subunit">
    <text evidence="1">The RNAP catalytic core consists of 2 alpha, 1 beta, 1 beta' and 1 omega subunit. When a sigma factor is associated with the core the holoenzyme is formed, which can initiate transcription.</text>
</comment>
<comment type="similarity">
    <text evidence="1">Belongs to the RNA polymerase beta chain family.</text>
</comment>
<organism>
    <name type="scientific">Staphylococcus aureus (strain bovine RF122 / ET3-1)</name>
    <dbReference type="NCBI Taxonomy" id="273036"/>
    <lineage>
        <taxon>Bacteria</taxon>
        <taxon>Bacillati</taxon>
        <taxon>Bacillota</taxon>
        <taxon>Bacilli</taxon>
        <taxon>Bacillales</taxon>
        <taxon>Staphylococcaceae</taxon>
        <taxon>Staphylococcus</taxon>
    </lineage>
</organism>
<sequence>MAGQVVQYGRHRKRRNYARISEVLELPNLIEIQTKSYEWFLREGLIEMFRDISPIEDFTGNLSLEFVDYRLGEPKYDLEESKNRDATYAAPLRVKVRLIIKETGEVKEQEVFMGDFPLMTDTGTFVINGAERVIVSQLVRSPSVYFNEKIDKNGRENYDATIIPNRGAWLEYETDAKDVVYVRIDRTRKLPLTVLLRALGFSSDQEIVDLLGDNEYLRNTLEKDGTENTEQALLEIYERLRPGEPPTVENAKSLLYSRFFDPKRYDLASVGRYKTNKKLHLKHRLFNQKLAEPIVNTETGEIVVEEGTVLDRRKIDEIMDVLESNANSEVFELHGSVIDEPVEIQSIKVYVPNDDEGRTTTVIGNAFPDSEVKCITPADIIASMSYFFNLLSGIGYTDDIDHLGNRRLRSVGELLQNQFRIGLSRMERVVRERMSIQDTESITPQQLINIRPVIASIKEFFGSSQLSQFMDQANPLAELTHKRRLSALGPGGLTRERAQMEVRDVHYSHYGRMCPIETPEGPNIGLINSLSSYARVNEFGFIETPYRKVDLDTHAITDQIDYLTADEEDSYVVAQANSKLDENGRFMDDEVVCRFRGNNTVMAKEKMDYMDVSPKQVVSAATACIPFLENDDSNRALMGANMQRQAVPLMNPEAPFVGTGMEHVAARDSGAAITAKHRGRVEHVESNEILVRRLVEENGVEHEGELDRYPLAKFKRSNSGTCYNQRPIVAVGDVVEYNEILADGPSMELGEMALGRNVVVGFMTWDGYNYEDAVIMSERLVKDDVYTSIHIEEYESEARDTKLGPEEITRDIPNVSESALKNLDDRGIVYIGAEVKDGDILVGKVTPKGVTELTAEERLLHAIFGEKAREVRDTSLRVPHGAGGIVLDVKVFNREEGDDTLSPGVNQLVRVYIVQKRKIHVGDKMCGRHGNKGVISKIVPEEDMPYLPDGRPIDIMLNPLGVPSRMNIGQVLELHLGMAAKNLGIHVASPVFDGANDDDVWSTIEEAGMARDGKTVLYDGRTGEPFDNRISVGVMYMLKLAHMVDDKLHARSTGPYSLVTQQPLGGKAQFGGQRFGEMEVWALEAYGAAYTLQEILTYKSDDTVGRVKTYEAIVKGENISRPSVPESFRVLMKELQSLGLDVKVMDEQDNEIEMTDVDDDDVVERKVDLQQNDAPETQKEVTD</sequence>
<evidence type="ECO:0000255" key="1">
    <source>
        <dbReference type="HAMAP-Rule" id="MF_01321"/>
    </source>
</evidence>
<keyword id="KW-0240">DNA-directed RNA polymerase</keyword>
<keyword id="KW-0548">Nucleotidyltransferase</keyword>
<keyword id="KW-0804">Transcription</keyword>
<keyword id="KW-0808">Transferase</keyword>